<evidence type="ECO:0000255" key="1">
    <source>
        <dbReference type="HAMAP-Rule" id="MF_00580"/>
    </source>
</evidence>
<proteinExistence type="inferred from homology"/>
<feature type="chain" id="PRO_1000082390" description="Co-chaperonin GroES">
    <location>
        <begin position="1"/>
        <end position="97"/>
    </location>
</feature>
<organism>
    <name type="scientific">Salmonella arizonae (strain ATCC BAA-731 / CDC346-86 / RSK2980)</name>
    <dbReference type="NCBI Taxonomy" id="41514"/>
    <lineage>
        <taxon>Bacteria</taxon>
        <taxon>Pseudomonadati</taxon>
        <taxon>Pseudomonadota</taxon>
        <taxon>Gammaproteobacteria</taxon>
        <taxon>Enterobacterales</taxon>
        <taxon>Enterobacteriaceae</taxon>
        <taxon>Salmonella</taxon>
    </lineage>
</organism>
<accession>A9MFS0</accession>
<name>CH10_SALAR</name>
<reference key="1">
    <citation type="submission" date="2007-11" db="EMBL/GenBank/DDBJ databases">
        <authorList>
            <consortium name="The Salmonella enterica serovar Arizonae Genome Sequencing Project"/>
            <person name="McClelland M."/>
            <person name="Sanderson E.K."/>
            <person name="Porwollik S."/>
            <person name="Spieth J."/>
            <person name="Clifton W.S."/>
            <person name="Fulton R."/>
            <person name="Chunyan W."/>
            <person name="Wollam A."/>
            <person name="Shah N."/>
            <person name="Pepin K."/>
            <person name="Bhonagiri V."/>
            <person name="Nash W."/>
            <person name="Johnson M."/>
            <person name="Thiruvilangam P."/>
            <person name="Wilson R."/>
        </authorList>
    </citation>
    <scope>NUCLEOTIDE SEQUENCE [LARGE SCALE GENOMIC DNA]</scope>
    <source>
        <strain>ATCC BAA-731 / CDC346-86 / RSK2980</strain>
    </source>
</reference>
<sequence length="97" mass="10318">MSIRPLHDRVIVKRKEVESKSAGGIVLTGSAAGKSTRGEIIAVGKGRILDNGTVQPLDVKVGDIVIFNDGYGVKSEKIDNEEVLIMSESDILAIVEA</sequence>
<gene>
    <name evidence="1" type="primary">groES</name>
    <name evidence="1" type="synonym">groS</name>
    <name type="ordered locus">SARI_03303</name>
</gene>
<keyword id="KW-0143">Chaperone</keyword>
<keyword id="KW-0963">Cytoplasm</keyword>
<keyword id="KW-1185">Reference proteome</keyword>
<protein>
    <recommendedName>
        <fullName evidence="1">Co-chaperonin GroES</fullName>
    </recommendedName>
    <alternativeName>
        <fullName evidence="1">10 kDa chaperonin</fullName>
    </alternativeName>
    <alternativeName>
        <fullName evidence="1">Chaperonin-10</fullName>
        <shortName evidence="1">Cpn10</shortName>
    </alternativeName>
</protein>
<dbReference type="EMBL" id="CP000880">
    <property type="protein sequence ID" value="ABX23136.1"/>
    <property type="molecule type" value="Genomic_DNA"/>
</dbReference>
<dbReference type="SMR" id="A9MFS0"/>
<dbReference type="STRING" id="41514.SARI_03303"/>
<dbReference type="KEGG" id="ses:SARI_03303"/>
<dbReference type="HOGENOM" id="CLU_132825_1_1_6"/>
<dbReference type="Proteomes" id="UP000002084">
    <property type="component" value="Chromosome"/>
</dbReference>
<dbReference type="GO" id="GO:0005737">
    <property type="term" value="C:cytoplasm"/>
    <property type="evidence" value="ECO:0007669"/>
    <property type="project" value="UniProtKB-SubCell"/>
</dbReference>
<dbReference type="GO" id="GO:0005524">
    <property type="term" value="F:ATP binding"/>
    <property type="evidence" value="ECO:0007669"/>
    <property type="project" value="InterPro"/>
</dbReference>
<dbReference type="GO" id="GO:0046872">
    <property type="term" value="F:metal ion binding"/>
    <property type="evidence" value="ECO:0007669"/>
    <property type="project" value="TreeGrafter"/>
</dbReference>
<dbReference type="GO" id="GO:0044183">
    <property type="term" value="F:protein folding chaperone"/>
    <property type="evidence" value="ECO:0007669"/>
    <property type="project" value="InterPro"/>
</dbReference>
<dbReference type="GO" id="GO:0051087">
    <property type="term" value="F:protein-folding chaperone binding"/>
    <property type="evidence" value="ECO:0007669"/>
    <property type="project" value="TreeGrafter"/>
</dbReference>
<dbReference type="GO" id="GO:0051082">
    <property type="term" value="F:unfolded protein binding"/>
    <property type="evidence" value="ECO:0007669"/>
    <property type="project" value="TreeGrafter"/>
</dbReference>
<dbReference type="GO" id="GO:0051085">
    <property type="term" value="P:chaperone cofactor-dependent protein refolding"/>
    <property type="evidence" value="ECO:0007669"/>
    <property type="project" value="TreeGrafter"/>
</dbReference>
<dbReference type="CDD" id="cd00320">
    <property type="entry name" value="cpn10"/>
    <property type="match status" value="1"/>
</dbReference>
<dbReference type="FunFam" id="2.30.33.40:FF:000001">
    <property type="entry name" value="10 kDa chaperonin"/>
    <property type="match status" value="1"/>
</dbReference>
<dbReference type="Gene3D" id="2.30.33.40">
    <property type="entry name" value="GroES chaperonin"/>
    <property type="match status" value="1"/>
</dbReference>
<dbReference type="HAMAP" id="MF_00580">
    <property type="entry name" value="CH10"/>
    <property type="match status" value="1"/>
</dbReference>
<dbReference type="InterPro" id="IPR020818">
    <property type="entry name" value="Chaperonin_GroES"/>
</dbReference>
<dbReference type="InterPro" id="IPR037124">
    <property type="entry name" value="Chaperonin_GroES_sf"/>
</dbReference>
<dbReference type="InterPro" id="IPR018369">
    <property type="entry name" value="Chaprnonin_Cpn10_CS"/>
</dbReference>
<dbReference type="InterPro" id="IPR011032">
    <property type="entry name" value="GroES-like_sf"/>
</dbReference>
<dbReference type="NCBIfam" id="NF001526">
    <property type="entry name" value="PRK00364.1-1"/>
    <property type="match status" value="1"/>
</dbReference>
<dbReference type="NCBIfam" id="NF001527">
    <property type="entry name" value="PRK00364.1-2"/>
    <property type="match status" value="1"/>
</dbReference>
<dbReference type="NCBIfam" id="NF001531">
    <property type="entry name" value="PRK00364.2-2"/>
    <property type="match status" value="1"/>
</dbReference>
<dbReference type="PANTHER" id="PTHR10772">
    <property type="entry name" value="10 KDA HEAT SHOCK PROTEIN"/>
    <property type="match status" value="1"/>
</dbReference>
<dbReference type="PANTHER" id="PTHR10772:SF58">
    <property type="entry name" value="CO-CHAPERONIN GROES"/>
    <property type="match status" value="1"/>
</dbReference>
<dbReference type="Pfam" id="PF00166">
    <property type="entry name" value="Cpn10"/>
    <property type="match status" value="1"/>
</dbReference>
<dbReference type="PRINTS" id="PR00297">
    <property type="entry name" value="CHAPERONIN10"/>
</dbReference>
<dbReference type="SMART" id="SM00883">
    <property type="entry name" value="Cpn10"/>
    <property type="match status" value="1"/>
</dbReference>
<dbReference type="SUPFAM" id="SSF50129">
    <property type="entry name" value="GroES-like"/>
    <property type="match status" value="1"/>
</dbReference>
<dbReference type="PROSITE" id="PS00681">
    <property type="entry name" value="CHAPERONINS_CPN10"/>
    <property type="match status" value="1"/>
</dbReference>
<comment type="function">
    <text evidence="1">Together with the chaperonin GroEL, plays an essential role in assisting protein folding. The GroEL-GroES system forms a nano-cage that allows encapsulation of the non-native substrate proteins and provides a physical environment optimized to promote and accelerate protein folding. GroES binds to the apical surface of the GroEL ring, thereby capping the opening of the GroEL channel.</text>
</comment>
<comment type="subunit">
    <text evidence="1">Heptamer of 7 subunits arranged in a ring. Interacts with the chaperonin GroEL.</text>
</comment>
<comment type="subcellular location">
    <subcellularLocation>
        <location evidence="1">Cytoplasm</location>
    </subcellularLocation>
</comment>
<comment type="similarity">
    <text evidence="1">Belongs to the GroES chaperonin family.</text>
</comment>